<comment type="function">
    <text evidence="1">DNA ligase that catalyzes the formation of phosphodiester linkages between 5'-phosphoryl and 3'-hydroxyl groups in double-stranded DNA using NAD as a coenzyme and as the energy source for the reaction. It is essential for DNA replication and repair of damaged DNA.</text>
</comment>
<comment type="catalytic activity">
    <reaction evidence="1">
        <text>NAD(+) + (deoxyribonucleotide)n-3'-hydroxyl + 5'-phospho-(deoxyribonucleotide)m = (deoxyribonucleotide)n+m + AMP + beta-nicotinamide D-nucleotide.</text>
        <dbReference type="EC" id="6.5.1.2"/>
    </reaction>
</comment>
<comment type="cofactor">
    <cofactor evidence="1">
        <name>Mg(2+)</name>
        <dbReference type="ChEBI" id="CHEBI:18420"/>
    </cofactor>
    <cofactor evidence="1">
        <name>Mn(2+)</name>
        <dbReference type="ChEBI" id="CHEBI:29035"/>
    </cofactor>
</comment>
<comment type="similarity">
    <text evidence="1">Belongs to the NAD-dependent DNA ligase family. LigA subfamily.</text>
</comment>
<reference key="1">
    <citation type="journal article" date="2011" name="J. Bacteriol.">
        <title>Genome sequence of the verrucomicrobium Opitutus terrae PB90-1, an abundant inhabitant of rice paddy soil ecosystems.</title>
        <authorList>
            <person name="van Passel M.W."/>
            <person name="Kant R."/>
            <person name="Palva A."/>
            <person name="Copeland A."/>
            <person name="Lucas S."/>
            <person name="Lapidus A."/>
            <person name="Glavina del Rio T."/>
            <person name="Pitluck S."/>
            <person name="Goltsman E."/>
            <person name="Clum A."/>
            <person name="Sun H."/>
            <person name="Schmutz J."/>
            <person name="Larimer F.W."/>
            <person name="Land M.L."/>
            <person name="Hauser L."/>
            <person name="Kyrpides N."/>
            <person name="Mikhailova N."/>
            <person name="Richardson P.P."/>
            <person name="Janssen P.H."/>
            <person name="de Vos W.M."/>
            <person name="Smidt H."/>
        </authorList>
    </citation>
    <scope>NUCLEOTIDE SEQUENCE [LARGE SCALE GENOMIC DNA]</scope>
    <source>
        <strain>DSM 11246 / JCM 15787 / PB90-1</strain>
    </source>
</reference>
<proteinExistence type="inferred from homology"/>
<dbReference type="EC" id="6.5.1.2" evidence="1"/>
<dbReference type="EMBL" id="CP001032">
    <property type="protein sequence ID" value="ACB73296.1"/>
    <property type="molecule type" value="Genomic_DNA"/>
</dbReference>
<dbReference type="RefSeq" id="WP_012372834.1">
    <property type="nucleotide sequence ID" value="NC_010571.1"/>
</dbReference>
<dbReference type="SMR" id="B1ZWH2"/>
<dbReference type="STRING" id="452637.Oter_0004"/>
<dbReference type="KEGG" id="ote:Oter_0004"/>
<dbReference type="eggNOG" id="COG0272">
    <property type="taxonomic scope" value="Bacteria"/>
</dbReference>
<dbReference type="HOGENOM" id="CLU_007764_2_1_0"/>
<dbReference type="OrthoDB" id="9759736at2"/>
<dbReference type="Proteomes" id="UP000007013">
    <property type="component" value="Chromosome"/>
</dbReference>
<dbReference type="GO" id="GO:0005829">
    <property type="term" value="C:cytosol"/>
    <property type="evidence" value="ECO:0007669"/>
    <property type="project" value="TreeGrafter"/>
</dbReference>
<dbReference type="GO" id="GO:0003911">
    <property type="term" value="F:DNA ligase (NAD+) activity"/>
    <property type="evidence" value="ECO:0007669"/>
    <property type="project" value="UniProtKB-UniRule"/>
</dbReference>
<dbReference type="GO" id="GO:0046872">
    <property type="term" value="F:metal ion binding"/>
    <property type="evidence" value="ECO:0007669"/>
    <property type="project" value="UniProtKB-KW"/>
</dbReference>
<dbReference type="GO" id="GO:0006281">
    <property type="term" value="P:DNA repair"/>
    <property type="evidence" value="ECO:0007669"/>
    <property type="project" value="UniProtKB-KW"/>
</dbReference>
<dbReference type="GO" id="GO:0006260">
    <property type="term" value="P:DNA replication"/>
    <property type="evidence" value="ECO:0007669"/>
    <property type="project" value="UniProtKB-KW"/>
</dbReference>
<dbReference type="CDD" id="cd17748">
    <property type="entry name" value="BRCT_DNA_ligase_like"/>
    <property type="match status" value="1"/>
</dbReference>
<dbReference type="CDD" id="cd00114">
    <property type="entry name" value="LIGANc"/>
    <property type="match status" value="1"/>
</dbReference>
<dbReference type="FunFam" id="1.10.150.20:FF:000007">
    <property type="entry name" value="DNA ligase"/>
    <property type="match status" value="1"/>
</dbReference>
<dbReference type="FunFam" id="2.40.50.140:FF:000012">
    <property type="entry name" value="DNA ligase"/>
    <property type="match status" value="1"/>
</dbReference>
<dbReference type="Gene3D" id="6.20.10.30">
    <property type="match status" value="1"/>
</dbReference>
<dbReference type="Gene3D" id="1.10.150.20">
    <property type="entry name" value="5' to 3' exonuclease, C-terminal subdomain"/>
    <property type="match status" value="2"/>
</dbReference>
<dbReference type="Gene3D" id="3.40.50.10190">
    <property type="entry name" value="BRCT domain"/>
    <property type="match status" value="1"/>
</dbReference>
<dbReference type="Gene3D" id="3.30.470.30">
    <property type="entry name" value="DNA ligase/mRNA capping enzyme"/>
    <property type="match status" value="1"/>
</dbReference>
<dbReference type="Gene3D" id="1.10.287.610">
    <property type="entry name" value="Helix hairpin bin"/>
    <property type="match status" value="1"/>
</dbReference>
<dbReference type="Gene3D" id="2.40.50.140">
    <property type="entry name" value="Nucleic acid-binding proteins"/>
    <property type="match status" value="1"/>
</dbReference>
<dbReference type="HAMAP" id="MF_01588">
    <property type="entry name" value="DNA_ligase_A"/>
    <property type="match status" value="1"/>
</dbReference>
<dbReference type="InterPro" id="IPR001357">
    <property type="entry name" value="BRCT_dom"/>
</dbReference>
<dbReference type="InterPro" id="IPR036420">
    <property type="entry name" value="BRCT_dom_sf"/>
</dbReference>
<dbReference type="InterPro" id="IPR041663">
    <property type="entry name" value="DisA/LigA_HHH"/>
</dbReference>
<dbReference type="InterPro" id="IPR001679">
    <property type="entry name" value="DNA_ligase"/>
</dbReference>
<dbReference type="InterPro" id="IPR018239">
    <property type="entry name" value="DNA_ligase_AS"/>
</dbReference>
<dbReference type="InterPro" id="IPR033136">
    <property type="entry name" value="DNA_ligase_CS"/>
</dbReference>
<dbReference type="InterPro" id="IPR013839">
    <property type="entry name" value="DNAligase_adenylation"/>
</dbReference>
<dbReference type="InterPro" id="IPR013840">
    <property type="entry name" value="DNAligase_N"/>
</dbReference>
<dbReference type="InterPro" id="IPR012340">
    <property type="entry name" value="NA-bd_OB-fold"/>
</dbReference>
<dbReference type="InterPro" id="IPR004150">
    <property type="entry name" value="NAD_DNA_ligase_OB"/>
</dbReference>
<dbReference type="InterPro" id="IPR010994">
    <property type="entry name" value="RuvA_2-like"/>
</dbReference>
<dbReference type="InterPro" id="IPR004149">
    <property type="entry name" value="Znf_DNAligase_C4"/>
</dbReference>
<dbReference type="NCBIfam" id="TIGR00575">
    <property type="entry name" value="dnlj"/>
    <property type="match status" value="1"/>
</dbReference>
<dbReference type="NCBIfam" id="NF005932">
    <property type="entry name" value="PRK07956.1"/>
    <property type="match status" value="1"/>
</dbReference>
<dbReference type="PANTHER" id="PTHR23389">
    <property type="entry name" value="CHROMOSOME TRANSMISSION FIDELITY FACTOR 18"/>
    <property type="match status" value="1"/>
</dbReference>
<dbReference type="PANTHER" id="PTHR23389:SF9">
    <property type="entry name" value="DNA LIGASE"/>
    <property type="match status" value="1"/>
</dbReference>
<dbReference type="Pfam" id="PF00533">
    <property type="entry name" value="BRCT"/>
    <property type="match status" value="1"/>
</dbReference>
<dbReference type="Pfam" id="PF01653">
    <property type="entry name" value="DNA_ligase_aden"/>
    <property type="match status" value="1"/>
</dbReference>
<dbReference type="Pfam" id="PF03120">
    <property type="entry name" value="DNA_ligase_OB"/>
    <property type="match status" value="1"/>
</dbReference>
<dbReference type="Pfam" id="PF03119">
    <property type="entry name" value="DNA_ligase_ZBD"/>
    <property type="match status" value="1"/>
</dbReference>
<dbReference type="Pfam" id="PF12826">
    <property type="entry name" value="HHH_2"/>
    <property type="match status" value="1"/>
</dbReference>
<dbReference type="Pfam" id="PF22745">
    <property type="entry name" value="Nlig-Ia"/>
    <property type="match status" value="1"/>
</dbReference>
<dbReference type="PIRSF" id="PIRSF001604">
    <property type="entry name" value="LigA"/>
    <property type="match status" value="1"/>
</dbReference>
<dbReference type="SMART" id="SM00292">
    <property type="entry name" value="BRCT"/>
    <property type="match status" value="1"/>
</dbReference>
<dbReference type="SMART" id="SM00532">
    <property type="entry name" value="LIGANc"/>
    <property type="match status" value="1"/>
</dbReference>
<dbReference type="SUPFAM" id="SSF52113">
    <property type="entry name" value="BRCT domain"/>
    <property type="match status" value="1"/>
</dbReference>
<dbReference type="SUPFAM" id="SSF56091">
    <property type="entry name" value="DNA ligase/mRNA capping enzyme, catalytic domain"/>
    <property type="match status" value="1"/>
</dbReference>
<dbReference type="SUPFAM" id="SSF50249">
    <property type="entry name" value="Nucleic acid-binding proteins"/>
    <property type="match status" value="1"/>
</dbReference>
<dbReference type="SUPFAM" id="SSF47781">
    <property type="entry name" value="RuvA domain 2-like"/>
    <property type="match status" value="1"/>
</dbReference>
<dbReference type="PROSITE" id="PS50172">
    <property type="entry name" value="BRCT"/>
    <property type="match status" value="1"/>
</dbReference>
<dbReference type="PROSITE" id="PS01055">
    <property type="entry name" value="DNA_LIGASE_N1"/>
    <property type="match status" value="1"/>
</dbReference>
<dbReference type="PROSITE" id="PS01056">
    <property type="entry name" value="DNA_LIGASE_N2"/>
    <property type="match status" value="1"/>
</dbReference>
<gene>
    <name evidence="1" type="primary">ligA1</name>
    <name type="ordered locus">Oter_0004</name>
</gene>
<name>DNLJ1_OPITP</name>
<sequence length="675" mass="74234">MTPVEAQSRIAELRAQVARHDELYHRRAQPQIGDFEYDALKRELAELEAAWPQFARGASPTEQVGDDRTEGFQVYRHRERMMSLDNTYSETELREFHDRLVRELERDGLKFVIEPKIDGLAVSITYEKGKLVRAVTRGNGIEGDDITTNALTIKSLPRELKRADGVPLPAVIEIRGEVFLTTEEFLRINRQREEAGEPLYANPRNLAAGTIKQLDPREVAQRKLEVVLYGRGYVEPASALPETQAQFHGWVKAWGLPTVERFWTATGADEIWAAVQELDALRDTFAYATDGAVVKLDAVPLQRRAGSTSKSPRWAMAYKFAPDRAETQLRAITVQVGRTGVLTPVAELDPVQLAGTTVSRATLHNRDEIARKDIRVGDFVYVEKAGEIIPAVIGVNPARRAPECVPYVFPEKCPECGTAVVQLEGEVAVRCPNFSCPVQVRRRVQHFASKACVDIEGMGEAMVDVLVEKGWVHSVPDIYQLKRENLLTLGKSVEKSTDKLLEAIEASKRAELWRFIHGLGIPHAGAAAAKDLARTFGGLERLASARYEDFIREKASVIGGIGETMALAILAYFAEPRNRAVVDELVRVGVQPVVPNSGSALAGKTFVLTGTLPTLTRDEATAQIEAAGGKVSSGVSKKTSYVLAGEEAGSKLEKARALAVPVIDEAEFLRLLSGG</sequence>
<keyword id="KW-0227">DNA damage</keyword>
<keyword id="KW-0234">DNA repair</keyword>
<keyword id="KW-0235">DNA replication</keyword>
<keyword id="KW-0436">Ligase</keyword>
<keyword id="KW-0460">Magnesium</keyword>
<keyword id="KW-0464">Manganese</keyword>
<keyword id="KW-0479">Metal-binding</keyword>
<keyword id="KW-0520">NAD</keyword>
<keyword id="KW-1185">Reference proteome</keyword>
<keyword id="KW-0862">Zinc</keyword>
<organism>
    <name type="scientific">Opitutus terrae (strain DSM 11246 / JCM 15787 / PB90-1)</name>
    <dbReference type="NCBI Taxonomy" id="452637"/>
    <lineage>
        <taxon>Bacteria</taxon>
        <taxon>Pseudomonadati</taxon>
        <taxon>Verrucomicrobiota</taxon>
        <taxon>Opitutia</taxon>
        <taxon>Opitutales</taxon>
        <taxon>Opitutaceae</taxon>
        <taxon>Opitutus</taxon>
    </lineage>
</organism>
<evidence type="ECO:0000255" key="1">
    <source>
        <dbReference type="HAMAP-Rule" id="MF_01588"/>
    </source>
</evidence>
<accession>B1ZWH2</accession>
<feature type="chain" id="PRO_0000380434" description="DNA ligase 1">
    <location>
        <begin position="1"/>
        <end position="675"/>
    </location>
</feature>
<feature type="domain" description="BRCT" evidence="1">
    <location>
        <begin position="596"/>
        <end position="675"/>
    </location>
</feature>
<feature type="active site" description="N6-AMP-lysine intermediate" evidence="1">
    <location>
        <position position="116"/>
    </location>
</feature>
<feature type="binding site" evidence="1">
    <location>
        <begin position="34"/>
        <end position="38"/>
    </location>
    <ligand>
        <name>NAD(+)</name>
        <dbReference type="ChEBI" id="CHEBI:57540"/>
    </ligand>
</feature>
<feature type="binding site" evidence="1">
    <location>
        <begin position="83"/>
        <end position="84"/>
    </location>
    <ligand>
        <name>NAD(+)</name>
        <dbReference type="ChEBI" id="CHEBI:57540"/>
    </ligand>
</feature>
<feature type="binding site" evidence="1">
    <location>
        <position position="114"/>
    </location>
    <ligand>
        <name>NAD(+)</name>
        <dbReference type="ChEBI" id="CHEBI:57540"/>
    </ligand>
</feature>
<feature type="binding site" evidence="1">
    <location>
        <position position="137"/>
    </location>
    <ligand>
        <name>NAD(+)</name>
        <dbReference type="ChEBI" id="CHEBI:57540"/>
    </ligand>
</feature>
<feature type="binding site" evidence="1">
    <location>
        <position position="177"/>
    </location>
    <ligand>
        <name>NAD(+)</name>
        <dbReference type="ChEBI" id="CHEBI:57540"/>
    </ligand>
</feature>
<feature type="binding site" evidence="1">
    <location>
        <position position="295"/>
    </location>
    <ligand>
        <name>NAD(+)</name>
        <dbReference type="ChEBI" id="CHEBI:57540"/>
    </ligand>
</feature>
<feature type="binding site" evidence="1">
    <location>
        <position position="319"/>
    </location>
    <ligand>
        <name>NAD(+)</name>
        <dbReference type="ChEBI" id="CHEBI:57540"/>
    </ligand>
</feature>
<feature type="binding site" evidence="1">
    <location>
        <position position="413"/>
    </location>
    <ligand>
        <name>Zn(2+)</name>
        <dbReference type="ChEBI" id="CHEBI:29105"/>
    </ligand>
</feature>
<feature type="binding site" evidence="1">
    <location>
        <position position="416"/>
    </location>
    <ligand>
        <name>Zn(2+)</name>
        <dbReference type="ChEBI" id="CHEBI:29105"/>
    </ligand>
</feature>
<feature type="binding site" evidence="1">
    <location>
        <position position="431"/>
    </location>
    <ligand>
        <name>Zn(2+)</name>
        <dbReference type="ChEBI" id="CHEBI:29105"/>
    </ligand>
</feature>
<feature type="binding site" evidence="1">
    <location>
        <position position="436"/>
    </location>
    <ligand>
        <name>Zn(2+)</name>
        <dbReference type="ChEBI" id="CHEBI:29105"/>
    </ligand>
</feature>
<protein>
    <recommendedName>
        <fullName evidence="1">DNA ligase 1</fullName>
        <ecNumber evidence="1">6.5.1.2</ecNumber>
    </recommendedName>
    <alternativeName>
        <fullName evidence="1">Polydeoxyribonucleotide synthase [NAD(+)] 1</fullName>
    </alternativeName>
</protein>